<name>SECB_HYPNA</name>
<organism>
    <name type="scientific">Hyphomonas neptunium (strain ATCC 15444)</name>
    <dbReference type="NCBI Taxonomy" id="228405"/>
    <lineage>
        <taxon>Bacteria</taxon>
        <taxon>Pseudomonadati</taxon>
        <taxon>Pseudomonadota</taxon>
        <taxon>Alphaproteobacteria</taxon>
        <taxon>Hyphomonadales</taxon>
        <taxon>Hyphomonadaceae</taxon>
        <taxon>Hyphomonas</taxon>
    </lineage>
</organism>
<feature type="chain" id="PRO_0000318240" description="Protein-export protein SecB">
    <location>
        <begin position="1"/>
        <end position="166"/>
    </location>
</feature>
<feature type="region of interest" description="Disordered" evidence="2">
    <location>
        <begin position="1"/>
        <end position="21"/>
    </location>
</feature>
<feature type="compositionally biased region" description="Polar residues" evidence="2">
    <location>
        <begin position="1"/>
        <end position="16"/>
    </location>
</feature>
<comment type="function">
    <text evidence="1">One of the proteins required for the normal export of preproteins out of the cell cytoplasm. It is a molecular chaperone that binds to a subset of precursor proteins, maintaining them in a translocation-competent state. It also specifically binds to its receptor SecA.</text>
</comment>
<comment type="subunit">
    <text evidence="1">Homotetramer, a dimer of dimers. One homotetramer interacts with 1 SecA dimer.</text>
</comment>
<comment type="subcellular location">
    <subcellularLocation>
        <location evidence="1">Cytoplasm</location>
    </subcellularLocation>
</comment>
<comment type="similarity">
    <text evidence="1">Belongs to the SecB family.</text>
</comment>
<keyword id="KW-0143">Chaperone</keyword>
<keyword id="KW-0963">Cytoplasm</keyword>
<keyword id="KW-0653">Protein transport</keyword>
<keyword id="KW-1185">Reference proteome</keyword>
<keyword id="KW-0811">Translocation</keyword>
<keyword id="KW-0813">Transport</keyword>
<accession>Q0C6A3</accession>
<protein>
    <recommendedName>
        <fullName evidence="1">Protein-export protein SecB</fullName>
    </recommendedName>
</protein>
<dbReference type="EMBL" id="CP000158">
    <property type="protein sequence ID" value="ABI77041.1"/>
    <property type="molecule type" value="Genomic_DNA"/>
</dbReference>
<dbReference type="RefSeq" id="WP_011645040.1">
    <property type="nucleotide sequence ID" value="NC_008358.1"/>
</dbReference>
<dbReference type="SMR" id="Q0C6A3"/>
<dbReference type="STRING" id="228405.HNE_0006"/>
<dbReference type="KEGG" id="hne:HNE_0006"/>
<dbReference type="eggNOG" id="COG1952">
    <property type="taxonomic scope" value="Bacteria"/>
</dbReference>
<dbReference type="HOGENOM" id="CLU_111574_0_0_5"/>
<dbReference type="Proteomes" id="UP000001959">
    <property type="component" value="Chromosome"/>
</dbReference>
<dbReference type="GO" id="GO:0005737">
    <property type="term" value="C:cytoplasm"/>
    <property type="evidence" value="ECO:0007669"/>
    <property type="project" value="UniProtKB-SubCell"/>
</dbReference>
<dbReference type="GO" id="GO:0051082">
    <property type="term" value="F:unfolded protein binding"/>
    <property type="evidence" value="ECO:0007669"/>
    <property type="project" value="InterPro"/>
</dbReference>
<dbReference type="GO" id="GO:0006457">
    <property type="term" value="P:protein folding"/>
    <property type="evidence" value="ECO:0007669"/>
    <property type="project" value="UniProtKB-UniRule"/>
</dbReference>
<dbReference type="GO" id="GO:0051262">
    <property type="term" value="P:protein tetramerization"/>
    <property type="evidence" value="ECO:0007669"/>
    <property type="project" value="InterPro"/>
</dbReference>
<dbReference type="GO" id="GO:0015031">
    <property type="term" value="P:protein transport"/>
    <property type="evidence" value="ECO:0007669"/>
    <property type="project" value="UniProtKB-UniRule"/>
</dbReference>
<dbReference type="Gene3D" id="3.10.420.10">
    <property type="entry name" value="SecB-like"/>
    <property type="match status" value="1"/>
</dbReference>
<dbReference type="HAMAP" id="MF_00821">
    <property type="entry name" value="SecB"/>
    <property type="match status" value="1"/>
</dbReference>
<dbReference type="InterPro" id="IPR003708">
    <property type="entry name" value="SecB"/>
</dbReference>
<dbReference type="InterPro" id="IPR035958">
    <property type="entry name" value="SecB-like_sf"/>
</dbReference>
<dbReference type="NCBIfam" id="NF004392">
    <property type="entry name" value="PRK05751.1-3"/>
    <property type="match status" value="1"/>
</dbReference>
<dbReference type="NCBIfam" id="TIGR00809">
    <property type="entry name" value="secB"/>
    <property type="match status" value="1"/>
</dbReference>
<dbReference type="PANTHER" id="PTHR36918">
    <property type="match status" value="1"/>
</dbReference>
<dbReference type="PANTHER" id="PTHR36918:SF1">
    <property type="entry name" value="PROTEIN-EXPORT PROTEIN SECB"/>
    <property type="match status" value="1"/>
</dbReference>
<dbReference type="Pfam" id="PF02556">
    <property type="entry name" value="SecB"/>
    <property type="match status" value="1"/>
</dbReference>
<dbReference type="PRINTS" id="PR01594">
    <property type="entry name" value="SECBCHAPRONE"/>
</dbReference>
<dbReference type="SUPFAM" id="SSF54611">
    <property type="entry name" value="SecB-like"/>
    <property type="match status" value="1"/>
</dbReference>
<gene>
    <name evidence="1" type="primary">secB</name>
    <name type="ordered locus">HNE_0006</name>
</gene>
<reference key="1">
    <citation type="journal article" date="2006" name="J. Bacteriol.">
        <title>Comparative genomic evidence for a close relationship between the dimorphic prosthecate bacteria Hyphomonas neptunium and Caulobacter crescentus.</title>
        <authorList>
            <person name="Badger J.H."/>
            <person name="Hoover T.R."/>
            <person name="Brun Y.V."/>
            <person name="Weiner R.M."/>
            <person name="Laub M.T."/>
            <person name="Alexandre G."/>
            <person name="Mrazek J."/>
            <person name="Ren Q."/>
            <person name="Paulsen I.T."/>
            <person name="Nelson K.E."/>
            <person name="Khouri H.M."/>
            <person name="Radune D."/>
            <person name="Sosa J."/>
            <person name="Dodson R.J."/>
            <person name="Sullivan S.A."/>
            <person name="Rosovitz M.J."/>
            <person name="Madupu R."/>
            <person name="Brinkac L.M."/>
            <person name="Durkin A.S."/>
            <person name="Daugherty S.C."/>
            <person name="Kothari S.P."/>
            <person name="Giglio M.G."/>
            <person name="Zhou L."/>
            <person name="Haft D.H."/>
            <person name="Selengut J.D."/>
            <person name="Davidsen T.M."/>
            <person name="Yang Q."/>
            <person name="Zafar N."/>
            <person name="Ward N.L."/>
        </authorList>
    </citation>
    <scope>NUCLEOTIDE SEQUENCE [LARGE SCALE GENOMIC DNA]</scope>
    <source>
        <strain>ATCC 15444</strain>
    </source>
</reference>
<evidence type="ECO:0000255" key="1">
    <source>
        <dbReference type="HAMAP-Rule" id="MF_00821"/>
    </source>
</evidence>
<evidence type="ECO:0000256" key="2">
    <source>
        <dbReference type="SAM" id="MobiDB-lite"/>
    </source>
</evidence>
<proteinExistence type="inferred from homology"/>
<sequence length="166" mass="17728">MTDTSAAGNPTPGQQPANPPSLRVLGQYVKDLSFENPGHPPVQTQPNIDLGIDVGASPHADGNGLFEVSLKLSAKASAGDTVLFISELDYAGLFQLQNVPEGQVEAMLLIECPRLLFPFARRIIAEITREGGFPPLLIDPVDFVALYQSQYRRAAERAQNGNGGAS</sequence>